<organism>
    <name type="scientific">Protobothrops flavoviridis</name>
    <name type="common">Habu</name>
    <name type="synonym">Trimeresurus flavoviridis</name>
    <dbReference type="NCBI Taxonomy" id="88087"/>
    <lineage>
        <taxon>Eukaryota</taxon>
        <taxon>Metazoa</taxon>
        <taxon>Chordata</taxon>
        <taxon>Craniata</taxon>
        <taxon>Vertebrata</taxon>
        <taxon>Euteleostomi</taxon>
        <taxon>Lepidosauria</taxon>
        <taxon>Squamata</taxon>
        <taxon>Bifurcata</taxon>
        <taxon>Unidentata</taxon>
        <taxon>Episquamata</taxon>
        <taxon>Toxicofera</taxon>
        <taxon>Serpentes</taxon>
        <taxon>Colubroidea</taxon>
        <taxon>Viperidae</taxon>
        <taxon>Crotalinae</taxon>
        <taxon>Protobothrops</taxon>
    </lineage>
</organism>
<protein>
    <recommendedName>
        <fullName>Acidic phospholipase A2 pgPLA 1b/pgPLA 2b</fullName>
        <shortName>svPLA2</shortName>
        <ecNumber>3.1.1.4</ecNumber>
    </recommendedName>
    <alternativeName>
        <fullName>Phosphatidylcholine 2-acylhydrolase</fullName>
    </alternativeName>
</protein>
<reference key="1">
    <citation type="journal article" date="1994" name="Biosci. Biotechnol. Biochem.">
        <title>Polymorphisms of Trimeresurus flavoviridis venom gland phospholipase A2 isozyme genes.</title>
        <authorList>
            <person name="Nakashima K."/>
            <person name="Nobuhisa I."/>
            <person name="Ogawa T."/>
            <person name="Hattori M."/>
            <person name="Sakaki Y."/>
            <person name="Kihara H."/>
            <person name="Ohno M."/>
        </authorList>
    </citation>
    <scope>NUCLEOTIDE SEQUENCE [GENOMIC DNA]</scope>
    <source>
        <tissue>Liver</tissue>
    </source>
</reference>
<dbReference type="EC" id="3.1.1.4"/>
<dbReference type="EMBL" id="D10723">
    <property type="protein sequence ID" value="BAA01566.1"/>
    <property type="molecule type" value="Genomic_DNA"/>
</dbReference>
<dbReference type="EMBL" id="D10725">
    <property type="protein sequence ID" value="BAA01568.1"/>
    <property type="molecule type" value="Genomic_DNA"/>
</dbReference>
<dbReference type="PIR" id="C48188">
    <property type="entry name" value="F48188"/>
</dbReference>
<dbReference type="SMR" id="Q92147"/>
<dbReference type="GO" id="GO:0005576">
    <property type="term" value="C:extracellular region"/>
    <property type="evidence" value="ECO:0007669"/>
    <property type="project" value="UniProtKB-SubCell"/>
</dbReference>
<dbReference type="GO" id="GO:0005509">
    <property type="term" value="F:calcium ion binding"/>
    <property type="evidence" value="ECO:0007669"/>
    <property type="project" value="InterPro"/>
</dbReference>
<dbReference type="GO" id="GO:0047498">
    <property type="term" value="F:calcium-dependent phospholipase A2 activity"/>
    <property type="evidence" value="ECO:0007669"/>
    <property type="project" value="TreeGrafter"/>
</dbReference>
<dbReference type="GO" id="GO:0005543">
    <property type="term" value="F:phospholipid binding"/>
    <property type="evidence" value="ECO:0007669"/>
    <property type="project" value="TreeGrafter"/>
</dbReference>
<dbReference type="GO" id="GO:0090729">
    <property type="term" value="F:toxin activity"/>
    <property type="evidence" value="ECO:0007669"/>
    <property type="project" value="UniProtKB-KW"/>
</dbReference>
<dbReference type="GO" id="GO:0050482">
    <property type="term" value="P:arachidonate secretion"/>
    <property type="evidence" value="ECO:0007669"/>
    <property type="project" value="InterPro"/>
</dbReference>
<dbReference type="GO" id="GO:0016042">
    <property type="term" value="P:lipid catabolic process"/>
    <property type="evidence" value="ECO:0007669"/>
    <property type="project" value="UniProtKB-KW"/>
</dbReference>
<dbReference type="GO" id="GO:0042130">
    <property type="term" value="P:negative regulation of T cell proliferation"/>
    <property type="evidence" value="ECO:0007669"/>
    <property type="project" value="TreeGrafter"/>
</dbReference>
<dbReference type="GO" id="GO:0006644">
    <property type="term" value="P:phospholipid metabolic process"/>
    <property type="evidence" value="ECO:0007669"/>
    <property type="project" value="InterPro"/>
</dbReference>
<dbReference type="CDD" id="cd00125">
    <property type="entry name" value="PLA2c"/>
    <property type="match status" value="1"/>
</dbReference>
<dbReference type="FunFam" id="1.20.90.10:FF:000001">
    <property type="entry name" value="Basic phospholipase A2 homolog"/>
    <property type="match status" value="1"/>
</dbReference>
<dbReference type="Gene3D" id="1.20.90.10">
    <property type="entry name" value="Phospholipase A2 domain"/>
    <property type="match status" value="1"/>
</dbReference>
<dbReference type="InterPro" id="IPR001211">
    <property type="entry name" value="PLipase_A2"/>
</dbReference>
<dbReference type="InterPro" id="IPR033112">
    <property type="entry name" value="PLipase_A2_Asp_AS"/>
</dbReference>
<dbReference type="InterPro" id="IPR016090">
    <property type="entry name" value="PLipase_A2_dom"/>
</dbReference>
<dbReference type="InterPro" id="IPR036444">
    <property type="entry name" value="PLipase_A2_dom_sf"/>
</dbReference>
<dbReference type="InterPro" id="IPR033113">
    <property type="entry name" value="PLipase_A2_His_AS"/>
</dbReference>
<dbReference type="PANTHER" id="PTHR11716">
    <property type="entry name" value="PHOSPHOLIPASE A2 FAMILY MEMBER"/>
    <property type="match status" value="1"/>
</dbReference>
<dbReference type="PANTHER" id="PTHR11716:SF9">
    <property type="entry name" value="PHOSPHOLIPASE A2, MEMBRANE ASSOCIATED"/>
    <property type="match status" value="1"/>
</dbReference>
<dbReference type="Pfam" id="PF00068">
    <property type="entry name" value="Phospholip_A2_1"/>
    <property type="match status" value="1"/>
</dbReference>
<dbReference type="PRINTS" id="PR00389">
    <property type="entry name" value="PHPHLIPASEA2"/>
</dbReference>
<dbReference type="SMART" id="SM00085">
    <property type="entry name" value="PA2c"/>
    <property type="match status" value="1"/>
</dbReference>
<dbReference type="SUPFAM" id="SSF48619">
    <property type="entry name" value="Phospholipase A2, PLA2"/>
    <property type="match status" value="1"/>
</dbReference>
<dbReference type="PROSITE" id="PS00119">
    <property type="entry name" value="PA2_ASP"/>
    <property type="match status" value="1"/>
</dbReference>
<dbReference type="PROSITE" id="PS00118">
    <property type="entry name" value="PA2_HIS"/>
    <property type="match status" value="1"/>
</dbReference>
<evidence type="ECO:0000250" key="1"/>
<evidence type="ECO:0000250" key="2">
    <source>
        <dbReference type="UniProtKB" id="O42187"/>
    </source>
</evidence>
<evidence type="ECO:0000250" key="3">
    <source>
        <dbReference type="UniProtKB" id="P06859"/>
    </source>
</evidence>
<evidence type="ECO:0000255" key="4">
    <source>
        <dbReference type="PROSITE-ProRule" id="PRU10035"/>
    </source>
</evidence>
<evidence type="ECO:0000255" key="5">
    <source>
        <dbReference type="PROSITE-ProRule" id="PRU10036"/>
    </source>
</evidence>
<evidence type="ECO:0000305" key="6"/>
<name>PA2AP_PROFL</name>
<accession>Q92147</accession>
<proteinExistence type="inferred from homology"/>
<comment type="function">
    <text>PLA2 catalyzes the calcium-dependent hydrolysis of the 2-acyl groups in 3-sn-phosphoglycerides.</text>
</comment>
<comment type="catalytic activity">
    <reaction evidence="4 5">
        <text>a 1,2-diacyl-sn-glycero-3-phosphocholine + H2O = a 1-acyl-sn-glycero-3-phosphocholine + a fatty acid + H(+)</text>
        <dbReference type="Rhea" id="RHEA:15801"/>
        <dbReference type="ChEBI" id="CHEBI:15377"/>
        <dbReference type="ChEBI" id="CHEBI:15378"/>
        <dbReference type="ChEBI" id="CHEBI:28868"/>
        <dbReference type="ChEBI" id="CHEBI:57643"/>
        <dbReference type="ChEBI" id="CHEBI:58168"/>
        <dbReference type="EC" id="3.1.1.4"/>
    </reaction>
</comment>
<comment type="cofactor">
    <cofactor evidence="1">
        <name>Ca(2+)</name>
        <dbReference type="ChEBI" id="CHEBI:29108"/>
    </cofactor>
    <text evidence="1">Binds 1 Ca(2+) ion.</text>
</comment>
<comment type="subcellular location">
    <subcellularLocation>
        <location evidence="1">Secreted</location>
    </subcellularLocation>
</comment>
<comment type="tissue specificity">
    <text>Expressed by the venom gland.</text>
</comment>
<comment type="similarity">
    <text evidence="6">Belongs to the phospholipase A2 family. Group II subfamily. D49 sub-subfamily.</text>
</comment>
<keyword id="KW-0106">Calcium</keyword>
<keyword id="KW-1015">Disulfide bond</keyword>
<keyword id="KW-0378">Hydrolase</keyword>
<keyword id="KW-0442">Lipid degradation</keyword>
<keyword id="KW-0443">Lipid metabolism</keyword>
<keyword id="KW-0479">Metal-binding</keyword>
<keyword id="KW-0964">Secreted</keyword>
<keyword id="KW-0732">Signal</keyword>
<keyword id="KW-0800">Toxin</keyword>
<sequence length="138" mass="15708">MRTLWIMAVLLVGVKGHLMQFENMIKKVTGRSGIWWYGSYGCYCGKGGEGRPQDPSDRCCFVHDCCYGKVTGCDPKDDFYIYSSENGDIVCGDDDLCKKEVCECDKAAAICFRDNMDTYQNKYWFYPASNCKEESEPC</sequence>
<feature type="signal peptide" evidence="1">
    <location>
        <begin position="1"/>
        <end position="16"/>
    </location>
</feature>
<feature type="chain" id="PRO_0000022955" description="Acidic phospholipase A2 pgPLA 1b/pgPLA 2b">
    <location>
        <begin position="17"/>
        <end position="138"/>
    </location>
</feature>
<feature type="active site" evidence="3">
    <location>
        <position position="63"/>
    </location>
</feature>
<feature type="active site" evidence="3">
    <location>
        <position position="105"/>
    </location>
</feature>
<feature type="binding site" evidence="2">
    <location>
        <position position="43"/>
    </location>
    <ligand>
        <name>Ca(2+)</name>
        <dbReference type="ChEBI" id="CHEBI:29108"/>
    </ligand>
</feature>
<feature type="binding site" evidence="2">
    <location>
        <position position="45"/>
    </location>
    <ligand>
        <name>Ca(2+)</name>
        <dbReference type="ChEBI" id="CHEBI:29108"/>
    </ligand>
</feature>
<feature type="binding site" evidence="2">
    <location>
        <position position="47"/>
    </location>
    <ligand>
        <name>Ca(2+)</name>
        <dbReference type="ChEBI" id="CHEBI:29108"/>
    </ligand>
</feature>
<feature type="binding site" evidence="2">
    <location>
        <position position="64"/>
    </location>
    <ligand>
        <name>Ca(2+)</name>
        <dbReference type="ChEBI" id="CHEBI:29108"/>
    </ligand>
</feature>
<feature type="disulfide bond" evidence="2">
    <location>
        <begin position="42"/>
        <end position="131"/>
    </location>
</feature>
<feature type="disulfide bond" evidence="2">
    <location>
        <begin position="44"/>
        <end position="60"/>
    </location>
</feature>
<feature type="disulfide bond" evidence="2">
    <location>
        <begin position="59"/>
        <end position="111"/>
    </location>
</feature>
<feature type="disulfide bond" evidence="2">
    <location>
        <begin position="65"/>
        <end position="138"/>
    </location>
</feature>
<feature type="disulfide bond" evidence="2">
    <location>
        <begin position="66"/>
        <end position="104"/>
    </location>
</feature>
<feature type="disulfide bond" evidence="2">
    <location>
        <begin position="73"/>
        <end position="97"/>
    </location>
</feature>
<feature type="disulfide bond" evidence="2">
    <location>
        <begin position="91"/>
        <end position="102"/>
    </location>
</feature>